<sequence length="668" mass="73561">MARSFGANSTVVLAIIFFGCLFAFSTAKEEATKLGSVIGIDLGTTYSCVGVYKNGHVEIIANDQGNRITPSWVGFTDSERLIGEAAKNQAAVNPERTVFDVKRLIGRKFEDKEVQKDRKLVPYQIVNKDGKPYIQVKIKDGETKVFSPEEISAMILTKMKETAEAYLGKKIKDAVVTVPAYFNDAQRQATKDAGVIAGLNVARIINEPTAAAIAYGLDKKGGEKNILVFDLGGGTFDVSVLTIDNGVFEVLSTNGDTHLGGEDFDHRIMEYFIKLIKKKHQKDISKDNKALGKLRRECERAKRALSSQHQVRVEIESLFDGVDLSEPLTRARFEELNNDLFRKTMGPVKKAMDDAGLQKSQIDEIVLVGGSTRIPKVQQLLKDFFEGKEPNKGVNPDEAVAYGAAVQGGILSGEGGDETKDILLLDVAPLTLGIETVGGVMTKLIPRNTVIPTKKSQVFTTYQDQQTTVSIQVFEGERSLTKDCRLLGKFDLTGVPPAPRGTPQIEVTFEVDANGILNVKAEDKASGKSEKITITNEKGRLSQEEIDRMVKEAEEFAEEDKKVKEKIDARNALETYVYNMKNQVSDKDKLADKLEGDEKEKIEAATKEALEWLDENQNSEKEEYDEKLKEVEAVCNPIITAVYQRSGGAPGAGGESSTEEEDESHDEL</sequence>
<accession>Q39043</accession>
<accession>Q39042</accession>
<feature type="signal peptide" evidence="1">
    <location>
        <begin position="1"/>
        <end position="23"/>
    </location>
</feature>
<feature type="chain" id="PRO_0000013589" description="Heat shock 70 kDa protein BIP2">
    <location>
        <begin position="24"/>
        <end position="668"/>
    </location>
</feature>
<feature type="region of interest" description="Disordered" evidence="3">
    <location>
        <begin position="643"/>
        <end position="668"/>
    </location>
</feature>
<feature type="short sequence motif" description="Prevents secretion from ER" evidence="2">
    <location>
        <begin position="665"/>
        <end position="668"/>
    </location>
</feature>
<feature type="compositionally biased region" description="Acidic residues" evidence="3">
    <location>
        <begin position="657"/>
        <end position="668"/>
    </location>
</feature>
<feature type="sequence conflict" description="In Ref. 2; BAA13948." evidence="18" ref="2">
    <original>A</original>
    <variation>T</variation>
    <location>
        <position position="163"/>
    </location>
</feature>
<feature type="sequence conflict" description="In Ref. 1; BAA12348." evidence="18" ref="1">
    <original>R</original>
    <variation>S</variation>
    <location>
        <position position="485"/>
    </location>
</feature>
<gene>
    <name evidence="14" type="primary">BIP2</name>
    <name evidence="16" type="synonym">BIP</name>
    <name evidence="13" type="synonym">HSP70-12</name>
    <name evidence="15" type="synonym">MED37_6</name>
    <name type="synonym">MED37F</name>
    <name evidence="20" type="ordered locus">At5g42020</name>
    <name evidence="21" type="ORF">MJC20.12</name>
</gene>
<protein>
    <recommendedName>
        <fullName>Heat shock 70 kDa protein BIP2</fullName>
    </recommendedName>
    <alternativeName>
        <fullName evidence="13">Heat shock 70 kDa protein 12</fullName>
    </alternativeName>
    <alternativeName>
        <fullName evidence="13">Heat shock protein 70-12</fullName>
        <shortName evidence="13">AtHsp70-12</shortName>
    </alternativeName>
    <alternativeName>
        <fullName>Luminal-binding protein 2</fullName>
        <shortName evidence="17">AtBP2</shortName>
        <shortName evidence="14">BiP2</shortName>
    </alternativeName>
</protein>
<proteinExistence type="evidence at protein level"/>
<organism>
    <name type="scientific">Arabidopsis thaliana</name>
    <name type="common">Mouse-ear cress</name>
    <dbReference type="NCBI Taxonomy" id="3702"/>
    <lineage>
        <taxon>Eukaryota</taxon>
        <taxon>Viridiplantae</taxon>
        <taxon>Streptophyta</taxon>
        <taxon>Embryophyta</taxon>
        <taxon>Tracheophyta</taxon>
        <taxon>Spermatophyta</taxon>
        <taxon>Magnoliopsida</taxon>
        <taxon>eudicotyledons</taxon>
        <taxon>Gunneridae</taxon>
        <taxon>Pentapetalae</taxon>
        <taxon>rosids</taxon>
        <taxon>malvids</taxon>
        <taxon>Brassicales</taxon>
        <taxon>Brassicaceae</taxon>
        <taxon>Camelineae</taxon>
        <taxon>Arabidopsis</taxon>
    </lineage>
</organism>
<keyword id="KW-0025">Alternative splicing</keyword>
<keyword id="KW-0067">ATP-binding</keyword>
<keyword id="KW-0143">Chaperone</keyword>
<keyword id="KW-0256">Endoplasmic reticulum</keyword>
<keyword id="KW-0547">Nucleotide-binding</keyword>
<keyword id="KW-0539">Nucleus</keyword>
<keyword id="KW-1185">Reference proteome</keyword>
<keyword id="KW-0732">Signal</keyword>
<keyword id="KW-0804">Transcription</keyword>
<keyword id="KW-0805">Transcription regulation</keyword>
<reference key="1">
    <citation type="journal article" date="1996" name="Plant Cell Physiol.">
        <title>Isolation and responses to stress of a gene that encodes a luminal binding protein in Arabidopsis thaliana.</title>
        <authorList>
            <person name="Koizumi N."/>
        </authorList>
    </citation>
    <scope>NUCLEOTIDE SEQUENCE [MRNA]</scope>
    <scope>INDUCTION</scope>
    <source>
        <strain>cv. Landsberg erecta</strain>
    </source>
</reference>
<reference key="2">
    <citation type="online journal article" date="1997" name="Plant Gene Register">
        <title>Isolation of two genes encoding luminal binding protein from Arabidopsis thaliana.</title>
        <authorList>
            <person name="Koizumi N."/>
            <person name="Sano H."/>
        </authorList>
        <locator>PGR97-028</locator>
    </citation>
    <scope>NUCLEOTIDE SEQUENCE [GENOMIC DNA]</scope>
    <source>
        <strain>cv. Columbia</strain>
    </source>
</reference>
<reference key="3">
    <citation type="journal article" date="1999" name="DNA Res.">
        <title>Structural analysis of Arabidopsis thaliana chromosome 5. IX. Sequence features of the regions of 1,011,550 bp covered by seventeen P1 and TAC clones.</title>
        <authorList>
            <person name="Kaneko T."/>
            <person name="Katoh T."/>
            <person name="Sato S."/>
            <person name="Nakamura Y."/>
            <person name="Asamizu E."/>
            <person name="Kotani H."/>
            <person name="Miyajima N."/>
            <person name="Tabata S."/>
        </authorList>
    </citation>
    <scope>NUCLEOTIDE SEQUENCE [LARGE SCALE GENOMIC DNA]</scope>
    <source>
        <strain>cv. Columbia</strain>
    </source>
</reference>
<reference key="4">
    <citation type="journal article" date="2017" name="Plant J.">
        <title>Araport11: a complete reannotation of the Arabidopsis thaliana reference genome.</title>
        <authorList>
            <person name="Cheng C.Y."/>
            <person name="Krishnakumar V."/>
            <person name="Chan A.P."/>
            <person name="Thibaud-Nissen F."/>
            <person name="Schobel S."/>
            <person name="Town C.D."/>
        </authorList>
    </citation>
    <scope>GENOME REANNOTATION</scope>
    <source>
        <strain>cv. Columbia</strain>
    </source>
</reference>
<reference key="5">
    <citation type="journal article" date="2003" name="Science">
        <title>Empirical analysis of transcriptional activity in the Arabidopsis genome.</title>
        <authorList>
            <person name="Yamada K."/>
            <person name="Lim J."/>
            <person name="Dale J.M."/>
            <person name="Chen H."/>
            <person name="Shinn P."/>
            <person name="Palm C.J."/>
            <person name="Southwick A.M."/>
            <person name="Wu H.C."/>
            <person name="Kim C.J."/>
            <person name="Nguyen M."/>
            <person name="Pham P.K."/>
            <person name="Cheuk R.F."/>
            <person name="Karlin-Newmann G."/>
            <person name="Liu S.X."/>
            <person name="Lam B."/>
            <person name="Sakano H."/>
            <person name="Wu T."/>
            <person name="Yu G."/>
            <person name="Miranda M."/>
            <person name="Quach H.L."/>
            <person name="Tripp M."/>
            <person name="Chang C.H."/>
            <person name="Lee J.M."/>
            <person name="Toriumi M.J."/>
            <person name="Chan M.M."/>
            <person name="Tang C.C."/>
            <person name="Onodera C.S."/>
            <person name="Deng J.M."/>
            <person name="Akiyama K."/>
            <person name="Ansari Y."/>
            <person name="Arakawa T."/>
            <person name="Banh J."/>
            <person name="Banno F."/>
            <person name="Bowser L."/>
            <person name="Brooks S.Y."/>
            <person name="Carninci P."/>
            <person name="Chao Q."/>
            <person name="Choy N."/>
            <person name="Enju A."/>
            <person name="Goldsmith A.D."/>
            <person name="Gurjal M."/>
            <person name="Hansen N.F."/>
            <person name="Hayashizaki Y."/>
            <person name="Johnson-Hopson C."/>
            <person name="Hsuan V.W."/>
            <person name="Iida K."/>
            <person name="Karnes M."/>
            <person name="Khan S."/>
            <person name="Koesema E."/>
            <person name="Ishida J."/>
            <person name="Jiang P.X."/>
            <person name="Jones T."/>
            <person name="Kawai J."/>
            <person name="Kamiya A."/>
            <person name="Meyers C."/>
            <person name="Nakajima M."/>
            <person name="Narusaka M."/>
            <person name="Seki M."/>
            <person name="Sakurai T."/>
            <person name="Satou M."/>
            <person name="Tamse R."/>
            <person name="Vaysberg M."/>
            <person name="Wallender E.K."/>
            <person name="Wong C."/>
            <person name="Yamamura Y."/>
            <person name="Yuan S."/>
            <person name="Shinozaki K."/>
            <person name="Davis R.W."/>
            <person name="Theologis A."/>
            <person name="Ecker J.R."/>
        </authorList>
    </citation>
    <scope>NUCLEOTIDE SEQUENCE [LARGE SCALE MRNA]</scope>
    <source>
        <strain>cv. Columbia</strain>
    </source>
</reference>
<reference key="6">
    <citation type="journal article" date="2001" name="Cell Stress Chaperones">
        <title>Genomic analysis of the Hsp70 superfamily in Arabidopsis thaliana.</title>
        <authorList>
            <person name="Lin B.L."/>
            <person name="Wang J.S."/>
            <person name="Liu H.C."/>
            <person name="Chen R.W."/>
            <person name="Meyer Y."/>
            <person name="Barakat A."/>
            <person name="Delseny M."/>
        </authorList>
    </citation>
    <scope>GENE FAMILY</scope>
    <scope>NOMENCLATURE</scope>
</reference>
<reference key="7">
    <citation type="journal article" date="2001" name="Plant Physiol.">
        <title>Comprehensive expression profile analysis of the Arabidopsis Hsp70 gene family.</title>
        <authorList>
            <person name="Sung D.Y."/>
            <person name="Vierling E."/>
            <person name="Guy C.L."/>
        </authorList>
    </citation>
    <scope>DNAK GENE SUBFAMILY</scope>
    <scope>INDUCTION</scope>
    <scope>DEVELOPMENTAL STAGE</scope>
</reference>
<reference key="8">
    <citation type="journal article" date="2006" name="Biochem. Biophys. Res. Commun.">
        <title>Induction of BiP by sugar independent of a cis-element for the unfolded protein response in Arabidopsis thaliana.</title>
        <authorList>
            <person name="Tajima H."/>
            <person name="Koizumi N."/>
        </authorList>
    </citation>
    <scope>INDUCTION BY SUGAR</scope>
</reference>
<reference key="9">
    <citation type="journal article" date="2007" name="Mol. Cell">
        <title>Purification of a plant mediator from Arabidopsis thaliana identifies PFT1 as the Med25 subunit.</title>
        <authorList>
            <person name="Baeckstroem S."/>
            <person name="Elfving N."/>
            <person name="Nilsson R."/>
            <person name="Wingsle G."/>
            <person name="Bjoerklund S."/>
        </authorList>
    </citation>
    <scope>IDENTIFICATION BY MASS SPECTROMETRY</scope>
</reference>
<reference key="10">
    <citation type="journal article" date="2007" name="Mol. Cell. Proteomics">
        <title>Multidimensional protein identification technology (MudPIT) analysis of ubiquitinated proteins in plants.</title>
        <authorList>
            <person name="Maor R."/>
            <person name="Jones A."/>
            <person name="Nuehse T.S."/>
            <person name="Studholme D.J."/>
            <person name="Peck S.C."/>
            <person name="Shirasu K."/>
        </authorList>
    </citation>
    <scope>IDENTIFICATION BY MASS SPECTROMETRY [LARGE SCALE ANALYSIS]</scope>
    <source>
        <strain>cv. Landsberg erecta</strain>
    </source>
</reference>
<reference key="11">
    <citation type="journal article" date="2008" name="Physiol. Plantarum">
        <title>Light enhances the unfolded protein response as measured by BiP2 gene expression and the secretory GFP-2SC marker in Arabidopsis.</title>
        <authorList>
            <person name="Lu D.P."/>
            <person name="Christopher D.A."/>
        </authorList>
    </citation>
    <scope>INDUCTION BY LIGHT; DTT AND TUNICAMYCIN</scope>
</reference>
<reference key="12">
    <citation type="journal article" date="2010" name="Proc. Natl. Acad. Sci. U.S.A.">
        <title>BiP-mediated polar nuclei fusion is essential for the regulation of endosperm nuclei proliferation in Arabidopsis thaliana.</title>
        <authorList>
            <person name="Maruyama D."/>
            <person name="Endo T."/>
            <person name="Nishikawa S."/>
        </authorList>
    </citation>
    <scope>FUNCTION</scope>
    <scope>DISRUPTION PHENOTYPE</scope>
</reference>
<reference key="13">
    <citation type="journal article" date="2010" name="Proc. Natl. Acad. Sci. U.S.A.">
        <title>AtBAG7, an Arabidopsis Bcl-2-associated athanogene, resides in the endoplasmic reticulum and is involved in the unfolded protein response.</title>
        <authorList>
            <person name="Williams B."/>
            <person name="Kabbage M."/>
            <person name="Britt R."/>
            <person name="Dickman M.B."/>
        </authorList>
    </citation>
    <scope>INTERACTION WITH BAG7</scope>
</reference>
<reference key="14">
    <citation type="journal article" date="2011" name="Plant Physiol.">
        <title>The Mediator complex in plants: structure, phylogeny, and expression profiling of representative genes in a dicot (Arabidopsis) and a monocot (rice) during reproduction and abiotic stress.</title>
        <authorList>
            <person name="Mathur S."/>
            <person name="Vyas S."/>
            <person name="Kapoor S."/>
            <person name="Tyagi A.K."/>
        </authorList>
    </citation>
    <scope>NOMENCLATURE</scope>
</reference>
<reference key="15">
    <citation type="journal article" date="2014" name="Plant Cell Physiol.">
        <title>Multiple BiP genes of Arabidopsis thaliana are required for male gametogenesis and pollen competitiveness.</title>
        <authorList>
            <person name="Maruyama D."/>
            <person name="Sugiyama T."/>
            <person name="Endo T."/>
            <person name="Nishikawa S."/>
        </authorList>
    </citation>
    <scope>FUNCTION</scope>
    <scope>TISSUE SPECIFICITY</scope>
    <scope>DISRUPTION PHENOTYPE</scope>
</reference>
<reference key="16">
    <citation type="journal article" date="2015" name="Plant Signal. Behav.">
        <title>BiP3 supports the early stages of female gametogenesis in the absence of BiP1 and BiP2 in Arabidopsis thaliana.</title>
        <authorList>
            <person name="Maruyama D."/>
            <person name="Endo T."/>
            <person name="Nishikawa S."/>
        </authorList>
    </citation>
    <scope>DISRUPTION PHENOTYPE</scope>
</reference>
<reference key="17">
    <citation type="journal article" date="2020" name="Plant Cell Physiol.">
        <title>Fertilization-coupled sperm nuclear fusion is required for normal endosperm nuclear proliferation.</title>
        <authorList>
            <person name="Maruyama D."/>
            <person name="Higashiyama T."/>
            <person name="Endo T."/>
            <person name="Nishikawa S.I."/>
        </authorList>
    </citation>
    <scope>FUNCTION</scope>
</reference>
<dbReference type="EMBL" id="D84414">
    <property type="protein sequence ID" value="BAA12348.1"/>
    <property type="molecule type" value="mRNA"/>
</dbReference>
<dbReference type="EMBL" id="D89342">
    <property type="protein sequence ID" value="BAA13948.1"/>
    <property type="molecule type" value="Genomic_DNA"/>
</dbReference>
<dbReference type="EMBL" id="AB017067">
    <property type="protein sequence ID" value="BAB08435.1"/>
    <property type="molecule type" value="Genomic_DNA"/>
</dbReference>
<dbReference type="EMBL" id="CP002688">
    <property type="protein sequence ID" value="AED94755.1"/>
    <property type="molecule type" value="Genomic_DNA"/>
</dbReference>
<dbReference type="EMBL" id="BT002392">
    <property type="protein sequence ID" value="AAO00752.1"/>
    <property type="molecule type" value="mRNA"/>
</dbReference>
<dbReference type="EMBL" id="BT008406">
    <property type="protein sequence ID" value="AAP37765.1"/>
    <property type="molecule type" value="mRNA"/>
</dbReference>
<dbReference type="PIR" id="S71171">
    <property type="entry name" value="S71171"/>
</dbReference>
<dbReference type="RefSeq" id="NP_851119.1">
    <molecule id="Q39043-1"/>
    <property type="nucleotide sequence ID" value="NM_180788.3"/>
</dbReference>
<dbReference type="SMR" id="Q39043"/>
<dbReference type="BioGRID" id="19457">
    <property type="interactions" value="26"/>
</dbReference>
<dbReference type="FunCoup" id="Q39043">
    <property type="interactions" value="2916"/>
</dbReference>
<dbReference type="IntAct" id="Q39043">
    <property type="interactions" value="3"/>
</dbReference>
<dbReference type="MINT" id="Q39043"/>
<dbReference type="STRING" id="3702.Q39043"/>
<dbReference type="iPTMnet" id="Q39043"/>
<dbReference type="MetOSite" id="Q39043"/>
<dbReference type="SwissPalm" id="Q39043"/>
<dbReference type="PaxDb" id="3702-AT5G42020.1"/>
<dbReference type="EnsemblPlants" id="AT5G42020.1">
    <molecule id="Q39043-1"/>
    <property type="protein sequence ID" value="AT5G42020.1"/>
    <property type="gene ID" value="AT5G42020"/>
</dbReference>
<dbReference type="GeneID" id="834207"/>
<dbReference type="Gramene" id="AT5G42020.1">
    <molecule id="Q39043-1"/>
    <property type="protein sequence ID" value="AT5G42020.1"/>
    <property type="gene ID" value="AT5G42020"/>
</dbReference>
<dbReference type="KEGG" id="ath:AT5G42020"/>
<dbReference type="Araport" id="AT5G42020"/>
<dbReference type="TAIR" id="AT5G42020">
    <property type="gene designation" value="BIP2"/>
</dbReference>
<dbReference type="eggNOG" id="KOG0100">
    <property type="taxonomic scope" value="Eukaryota"/>
</dbReference>
<dbReference type="HOGENOM" id="CLU_005965_7_2_1"/>
<dbReference type="InParanoid" id="Q39043"/>
<dbReference type="OMA" id="DSKPCIE"/>
<dbReference type="OrthoDB" id="1075026at2759"/>
<dbReference type="PhylomeDB" id="Q39043"/>
<dbReference type="CD-CODE" id="4299E36E">
    <property type="entry name" value="Nucleolus"/>
</dbReference>
<dbReference type="PRO" id="PR:Q39043"/>
<dbReference type="Proteomes" id="UP000006548">
    <property type="component" value="Chromosome 5"/>
</dbReference>
<dbReference type="ExpressionAtlas" id="Q39043">
    <property type="expression patterns" value="baseline and differential"/>
</dbReference>
<dbReference type="GO" id="GO:0005783">
    <property type="term" value="C:endoplasmic reticulum"/>
    <property type="evidence" value="ECO:0007005"/>
    <property type="project" value="TAIR"/>
</dbReference>
<dbReference type="GO" id="GO:0005788">
    <property type="term" value="C:endoplasmic reticulum lumen"/>
    <property type="evidence" value="ECO:0007669"/>
    <property type="project" value="UniProtKB-SubCell"/>
</dbReference>
<dbReference type="GO" id="GO:0016592">
    <property type="term" value="C:mediator complex"/>
    <property type="evidence" value="ECO:0000314"/>
    <property type="project" value="UniProtKB"/>
</dbReference>
<dbReference type="GO" id="GO:0005730">
    <property type="term" value="C:nucleolus"/>
    <property type="evidence" value="ECO:0007005"/>
    <property type="project" value="TAIR"/>
</dbReference>
<dbReference type="GO" id="GO:0005634">
    <property type="term" value="C:nucleus"/>
    <property type="evidence" value="ECO:0007005"/>
    <property type="project" value="TAIR"/>
</dbReference>
<dbReference type="GO" id="GO:0009505">
    <property type="term" value="C:plant-type cell wall"/>
    <property type="evidence" value="ECO:0007005"/>
    <property type="project" value="TAIR"/>
</dbReference>
<dbReference type="GO" id="GO:0000325">
    <property type="term" value="C:plant-type vacuole"/>
    <property type="evidence" value="ECO:0007005"/>
    <property type="project" value="TAIR"/>
</dbReference>
<dbReference type="GO" id="GO:0009506">
    <property type="term" value="C:plasmodesma"/>
    <property type="evidence" value="ECO:0007005"/>
    <property type="project" value="TAIR"/>
</dbReference>
<dbReference type="GO" id="GO:0009536">
    <property type="term" value="C:plastid"/>
    <property type="evidence" value="ECO:0007005"/>
    <property type="project" value="TAIR"/>
</dbReference>
<dbReference type="GO" id="GO:0099503">
    <property type="term" value="C:secretory vesicle"/>
    <property type="evidence" value="ECO:0007005"/>
    <property type="project" value="TAIR"/>
</dbReference>
<dbReference type="GO" id="GO:0005524">
    <property type="term" value="F:ATP binding"/>
    <property type="evidence" value="ECO:0007669"/>
    <property type="project" value="UniProtKB-KW"/>
</dbReference>
<dbReference type="GO" id="GO:0140662">
    <property type="term" value="F:ATP-dependent protein folding chaperone"/>
    <property type="evidence" value="ECO:0007669"/>
    <property type="project" value="InterPro"/>
</dbReference>
<dbReference type="GO" id="GO:0034976">
    <property type="term" value="P:response to endoplasmic reticulum stress"/>
    <property type="evidence" value="ECO:0000270"/>
    <property type="project" value="TAIR"/>
</dbReference>
<dbReference type="CDD" id="cd10241">
    <property type="entry name" value="ASKHA_NBD_HSP70_BiP"/>
    <property type="match status" value="1"/>
</dbReference>
<dbReference type="FunFam" id="2.60.34.10:FF:000002">
    <property type="entry name" value="Heat shock 70 kDa"/>
    <property type="match status" value="1"/>
</dbReference>
<dbReference type="FunFam" id="3.90.640.10:FF:000002">
    <property type="entry name" value="Heat shock 70 kDa"/>
    <property type="match status" value="1"/>
</dbReference>
<dbReference type="FunFam" id="3.30.30.30:FF:000001">
    <property type="entry name" value="heat shock 70 kDa protein-like"/>
    <property type="match status" value="1"/>
</dbReference>
<dbReference type="FunFam" id="3.30.420.40:FF:000026">
    <property type="entry name" value="Heat shock protein 70"/>
    <property type="match status" value="1"/>
</dbReference>
<dbReference type="FunFam" id="1.20.1270.10:FF:000015">
    <property type="entry name" value="Luminal-binding protein 5"/>
    <property type="match status" value="1"/>
</dbReference>
<dbReference type="Gene3D" id="1.20.1270.10">
    <property type="match status" value="1"/>
</dbReference>
<dbReference type="Gene3D" id="3.30.420.40">
    <property type="match status" value="2"/>
</dbReference>
<dbReference type="Gene3D" id="3.90.640.10">
    <property type="entry name" value="Actin, Chain A, domain 4"/>
    <property type="match status" value="1"/>
</dbReference>
<dbReference type="Gene3D" id="2.60.34.10">
    <property type="entry name" value="Substrate Binding Domain Of DNAk, Chain A, domain 1"/>
    <property type="match status" value="1"/>
</dbReference>
<dbReference type="InterPro" id="IPR043129">
    <property type="entry name" value="ATPase_NBD"/>
</dbReference>
<dbReference type="InterPro" id="IPR042050">
    <property type="entry name" value="BIP_NBD"/>
</dbReference>
<dbReference type="InterPro" id="IPR018181">
    <property type="entry name" value="Heat_shock_70_CS"/>
</dbReference>
<dbReference type="InterPro" id="IPR029048">
    <property type="entry name" value="HSP70_C_sf"/>
</dbReference>
<dbReference type="InterPro" id="IPR029047">
    <property type="entry name" value="HSP70_peptide-bd_sf"/>
</dbReference>
<dbReference type="InterPro" id="IPR013126">
    <property type="entry name" value="Hsp_70_fam"/>
</dbReference>
<dbReference type="NCBIfam" id="NF001413">
    <property type="entry name" value="PRK00290.1"/>
    <property type="match status" value="1"/>
</dbReference>
<dbReference type="PANTHER" id="PTHR19375">
    <property type="entry name" value="HEAT SHOCK PROTEIN 70KDA"/>
    <property type="match status" value="1"/>
</dbReference>
<dbReference type="Pfam" id="PF00012">
    <property type="entry name" value="HSP70"/>
    <property type="match status" value="1"/>
</dbReference>
<dbReference type="PRINTS" id="PR00301">
    <property type="entry name" value="HEATSHOCK70"/>
</dbReference>
<dbReference type="SUPFAM" id="SSF53067">
    <property type="entry name" value="Actin-like ATPase domain"/>
    <property type="match status" value="2"/>
</dbReference>
<dbReference type="SUPFAM" id="SSF100934">
    <property type="entry name" value="Heat shock protein 70kD (HSP70), C-terminal subdomain"/>
    <property type="match status" value="1"/>
</dbReference>
<dbReference type="SUPFAM" id="SSF100920">
    <property type="entry name" value="Heat shock protein 70kD (HSP70), peptide-binding domain"/>
    <property type="match status" value="1"/>
</dbReference>
<dbReference type="PROSITE" id="PS00014">
    <property type="entry name" value="ER_TARGET"/>
    <property type="match status" value="1"/>
</dbReference>
<dbReference type="PROSITE" id="PS00297">
    <property type="entry name" value="HSP70_1"/>
    <property type="match status" value="1"/>
</dbReference>
<dbReference type="PROSITE" id="PS00329">
    <property type="entry name" value="HSP70_2"/>
    <property type="match status" value="1"/>
</dbReference>
<dbReference type="PROSITE" id="PS01036">
    <property type="entry name" value="HSP70_3"/>
    <property type="match status" value="1"/>
</dbReference>
<evidence type="ECO:0000255" key="1"/>
<evidence type="ECO:0000255" key="2">
    <source>
        <dbReference type="PROSITE-ProRule" id="PRU10138"/>
    </source>
</evidence>
<evidence type="ECO:0000256" key="3">
    <source>
        <dbReference type="SAM" id="MobiDB-lite"/>
    </source>
</evidence>
<evidence type="ECO:0000269" key="4">
    <source>
    </source>
</evidence>
<evidence type="ECO:0000269" key="5">
    <source>
    </source>
</evidence>
<evidence type="ECO:0000269" key="6">
    <source>
    </source>
</evidence>
<evidence type="ECO:0000269" key="7">
    <source>
    </source>
</evidence>
<evidence type="ECO:0000269" key="8">
    <source>
    </source>
</evidence>
<evidence type="ECO:0000269" key="9">
    <source>
    </source>
</evidence>
<evidence type="ECO:0000269" key="10">
    <source>
    </source>
</evidence>
<evidence type="ECO:0000269" key="11">
    <source>
    </source>
</evidence>
<evidence type="ECO:0000269" key="12">
    <source>
    </source>
</evidence>
<evidence type="ECO:0000303" key="13">
    <source>
    </source>
</evidence>
<evidence type="ECO:0000303" key="14">
    <source>
    </source>
</evidence>
<evidence type="ECO:0000303" key="15">
    <source>
    </source>
</evidence>
<evidence type="ECO:0000303" key="16">
    <source>
    </source>
</evidence>
<evidence type="ECO:0000303" key="17">
    <source ref="2"/>
</evidence>
<evidence type="ECO:0000305" key="18"/>
<evidence type="ECO:0000305" key="19">
    <source>
    </source>
</evidence>
<evidence type="ECO:0000312" key="20">
    <source>
        <dbReference type="Araport" id="AT5G42020"/>
    </source>
</evidence>
<evidence type="ECO:0000312" key="21">
    <source>
        <dbReference type="EMBL" id="BAB08435.1"/>
    </source>
</evidence>
<comment type="function">
    <text evidence="7 9 11 19">In cooperation with other chaperones, Hsp70s are key components that facilitate folding of de novo synthesized proteins, assist translocation of precursor proteins into organelles, and are responsible for degradation of damaged protein under stress conditions (Probable). Involved in polar nuclei fusion during female gametophyte development and is essential for the regulation of endosperm nuclei proliferation (PubMed:20080634). Involved in sperm nuclear fusion with central cell polar nuclei at fertilization, which is critical for normal endosperm nuclear proliferation (PubMed:31410484). Required for pollen development and pollen tube growth (PubMed:24486762).</text>
</comment>
<comment type="subunit">
    <text evidence="8">Interacts with BAG7.</text>
</comment>
<comment type="subcellular location">
    <subcellularLocation>
        <location evidence="2">Endoplasmic reticulum lumen</location>
    </subcellularLocation>
    <subcellularLocation>
        <location evidence="18">Nucleus</location>
    </subcellularLocation>
</comment>
<comment type="alternative products">
    <event type="alternative splicing"/>
    <isoform>
        <id>Q39043-1</id>
        <name>1</name>
        <sequence type="displayed"/>
    </isoform>
    <text>A number of isoforms are produced. According to EST sequences.</text>
</comment>
<comment type="tissue specificity">
    <text evidence="9">Expressed in mature pollen grains, and pollen tubes.</text>
</comment>
<comment type="developmental stage">
    <text evidence="4">Down-regulated during seed maturation. Up-regulated during germination.</text>
</comment>
<comment type="induction">
    <text evidence="4 5 6 12">Induced by heat shock and sugar. Up-regulated by light, DTT and tunicamycin treatment.</text>
</comment>
<comment type="disruption phenotype">
    <text evidence="7 9 10">Bip1 and bip2 double mutation affects the fusion of polar nuclei during female gametophyte development (PubMed:20080634). Bip1 and bip2 double mutation affects pollen tube growth and length (PubMed:24486762). Bip1, bip2 and bip3 triple mutation is pollen lethal (PubMed:24486762). Bip1, bip2 and bip3 triple mutation affects female gametophyte development during the early stages (PubMed:26251880).</text>
</comment>
<comment type="similarity">
    <text evidence="18">Belongs to the heat shock protein 70 (TC 1.A.33) family. DnaK subfamily.</text>
</comment>
<name>BIP2_ARATH</name>